<reference key="1">
    <citation type="journal article" date="2006" name="PLoS Genet.">
        <title>The complete genome sequence and comparative genome analysis of the high pathogenicity Yersinia enterocolitica strain 8081.</title>
        <authorList>
            <person name="Thomson N.R."/>
            <person name="Howard S."/>
            <person name="Wren B.W."/>
            <person name="Holden M.T.G."/>
            <person name="Crossman L."/>
            <person name="Challis G.L."/>
            <person name="Churcher C."/>
            <person name="Mungall K."/>
            <person name="Brooks K."/>
            <person name="Chillingworth T."/>
            <person name="Feltwell T."/>
            <person name="Abdellah Z."/>
            <person name="Hauser H."/>
            <person name="Jagels K."/>
            <person name="Maddison M."/>
            <person name="Moule S."/>
            <person name="Sanders M."/>
            <person name="Whitehead S."/>
            <person name="Quail M.A."/>
            <person name="Dougan G."/>
            <person name="Parkhill J."/>
            <person name="Prentice M.B."/>
        </authorList>
    </citation>
    <scope>NUCLEOTIDE SEQUENCE [LARGE SCALE GENOMIC DNA]</scope>
    <source>
        <strain>NCTC 13174 / 8081</strain>
    </source>
</reference>
<name>MNMC_YERE8</name>
<accession>A1JKL6</accession>
<comment type="function">
    <text evidence="1">Catalyzes the last two steps in the biosynthesis of 5-methylaminomethyl-2-thiouridine (mnm(5)s(2)U) at the wobble position (U34) in tRNA. Catalyzes the FAD-dependent demodification of cmnm(5)s(2)U34 to nm(5)s(2)U34, followed by the transfer of a methyl group from S-adenosyl-L-methionine to nm(5)s(2)U34, to form mnm(5)s(2)U34.</text>
</comment>
<comment type="catalytic activity">
    <reaction evidence="1">
        <text>5-aminomethyl-2-thiouridine(34) in tRNA + S-adenosyl-L-methionine = 5-methylaminomethyl-2-thiouridine(34) in tRNA + S-adenosyl-L-homocysteine + H(+)</text>
        <dbReference type="Rhea" id="RHEA:19569"/>
        <dbReference type="Rhea" id="RHEA-COMP:10195"/>
        <dbReference type="Rhea" id="RHEA-COMP:10197"/>
        <dbReference type="ChEBI" id="CHEBI:15378"/>
        <dbReference type="ChEBI" id="CHEBI:57856"/>
        <dbReference type="ChEBI" id="CHEBI:59789"/>
        <dbReference type="ChEBI" id="CHEBI:74454"/>
        <dbReference type="ChEBI" id="CHEBI:74455"/>
        <dbReference type="EC" id="2.1.1.61"/>
    </reaction>
</comment>
<comment type="cofactor">
    <cofactor evidence="1">
        <name>FAD</name>
        <dbReference type="ChEBI" id="CHEBI:57692"/>
    </cofactor>
</comment>
<comment type="subcellular location">
    <subcellularLocation>
        <location evidence="1">Cytoplasm</location>
    </subcellularLocation>
</comment>
<comment type="similarity">
    <text evidence="1">In the N-terminal section; belongs to the methyltransferase superfamily. tRNA (mnm(5)s(2)U34)-methyltransferase family.</text>
</comment>
<comment type="similarity">
    <text evidence="1">In the C-terminal section; belongs to the DAO family.</text>
</comment>
<comment type="sequence caution" evidence="2">
    <conflict type="erroneous initiation">
        <sequence resource="EMBL-CDS" id="CAL11378"/>
    </conflict>
</comment>
<gene>
    <name evidence="1" type="primary">mnmC</name>
    <name type="ordered locus">YE1286</name>
</gene>
<keyword id="KW-0963">Cytoplasm</keyword>
<keyword id="KW-0274">FAD</keyword>
<keyword id="KW-0285">Flavoprotein</keyword>
<keyword id="KW-0489">Methyltransferase</keyword>
<keyword id="KW-0511">Multifunctional enzyme</keyword>
<keyword id="KW-0560">Oxidoreductase</keyword>
<keyword id="KW-0949">S-adenosyl-L-methionine</keyword>
<keyword id="KW-0808">Transferase</keyword>
<keyword id="KW-0819">tRNA processing</keyword>
<protein>
    <recommendedName>
        <fullName evidence="1">tRNA 5-methylaminomethyl-2-thiouridine biosynthesis bifunctional protein MnmC</fullName>
        <shortName evidence="1">tRNA mnm(5)s(2)U biosynthesis bifunctional protein</shortName>
    </recommendedName>
    <domain>
        <recommendedName>
            <fullName evidence="1">tRNA (mnm(5)s(2)U34)-methyltransferase</fullName>
            <ecNumber evidence="1">2.1.1.61</ecNumber>
        </recommendedName>
    </domain>
    <domain>
        <recommendedName>
            <fullName evidence="1">FAD-dependent cmnm(5)s(2)U34 oxidoreductase</fullName>
            <ecNumber evidence="1">1.5.-.-</ecNumber>
        </recommendedName>
    </domain>
</protein>
<evidence type="ECO:0000255" key="1">
    <source>
        <dbReference type="HAMAP-Rule" id="MF_01102"/>
    </source>
</evidence>
<evidence type="ECO:0000305" key="2"/>
<sequence>MSHPPIQTATLSWNEQGTPVSEQFGDIYFSNEDGLEETHYVFLKGNGFPERFALHPRDNCVFAETGFGTGLNFLTLWRDFAQFRQLHPAAKLQRLHYISFEKYPLQVADLAAAHQRWPELACFAEQLRAQWPLPLAGCHRILLAEGAITLDLWFGDVNTLLPQLDSSLNNQVDAWFLDGFAPAKNPDMWNDVLFNAMARMARPGGTFATFTAAGFVRRGLQQAGFDVAKIKGFGQKREMLTGILPQRLNTQSEPWYHRPLATRCDDIAIIGGGIVSALTALALLRRSAKVTLYCADALPAQGASGNRQGALYPLLNGKNDALEIFFTSAFTFARRQYSQLLEQGIRFDHQWCGVSQLAFDEKSRGKINKMLQTDWPPQLAAAMSREQLSALAGLDCAHDGIHYPAGGWLCPSDLTTALMALAQQLGMTCHYGHELCQLERVDGLWQLIFTSPQVNRQHTTVVLATGHRLPEWQQTQHLPLSAVRGQVSHIPTTPVLSQLRQVLCYDGYLTPVNPANQHHCIGASYQRGDVTTDFRADEQQENRDRLLRCLPDVSWPQQVDISDNQARCGVRCAIRDHLPMVGAVPDYSATLAQYQDLPRKIQHGEDIPLAPVWPELFMVGALGSRGLCSAPLVAEILAAQMFGEPQPLDTTTLAALNPNRFWIRKLLKGRPVQQRVSVLS</sequence>
<feature type="chain" id="PRO_0000348047" description="tRNA 5-methylaminomethyl-2-thiouridine biosynthesis bifunctional protein MnmC">
    <location>
        <begin position="1"/>
        <end position="680"/>
    </location>
</feature>
<feature type="region of interest" description="tRNA (mnm(5)s(2)U34)-methyltransferase">
    <location>
        <begin position="1"/>
        <end position="245"/>
    </location>
</feature>
<feature type="region of interest" description="FAD-dependent cmnm(5)s(2)U34 oxidoreductase">
    <location>
        <begin position="270"/>
        <end position="680"/>
    </location>
</feature>
<dbReference type="EC" id="2.1.1.61" evidence="1"/>
<dbReference type="EC" id="1.5.-.-" evidence="1"/>
<dbReference type="EMBL" id="AM286415">
    <property type="protein sequence ID" value="CAL11378.1"/>
    <property type="status" value="ALT_INIT"/>
    <property type="molecule type" value="Genomic_DNA"/>
</dbReference>
<dbReference type="RefSeq" id="WP_011815908.1">
    <property type="nucleotide sequence ID" value="NC_008800.1"/>
</dbReference>
<dbReference type="RefSeq" id="YP_001005607.2">
    <property type="nucleotide sequence ID" value="NC_008800.1"/>
</dbReference>
<dbReference type="SMR" id="A1JKL6"/>
<dbReference type="KEGG" id="yen:YE1286"/>
<dbReference type="PATRIC" id="fig|393305.7.peg.1396"/>
<dbReference type="eggNOG" id="COG0665">
    <property type="taxonomic scope" value="Bacteria"/>
</dbReference>
<dbReference type="eggNOG" id="COG4121">
    <property type="taxonomic scope" value="Bacteria"/>
</dbReference>
<dbReference type="HOGENOM" id="CLU_022427_2_1_6"/>
<dbReference type="OrthoDB" id="9786494at2"/>
<dbReference type="Proteomes" id="UP000000642">
    <property type="component" value="Chromosome"/>
</dbReference>
<dbReference type="GO" id="GO:0005737">
    <property type="term" value="C:cytoplasm"/>
    <property type="evidence" value="ECO:0007669"/>
    <property type="project" value="UniProtKB-SubCell"/>
</dbReference>
<dbReference type="GO" id="GO:0050660">
    <property type="term" value="F:flavin adenine dinucleotide binding"/>
    <property type="evidence" value="ECO:0007669"/>
    <property type="project" value="UniProtKB-UniRule"/>
</dbReference>
<dbReference type="GO" id="GO:0016645">
    <property type="term" value="F:oxidoreductase activity, acting on the CH-NH group of donors"/>
    <property type="evidence" value="ECO:0007669"/>
    <property type="project" value="InterPro"/>
</dbReference>
<dbReference type="GO" id="GO:0004808">
    <property type="term" value="F:tRNA (5-methylaminomethyl-2-thiouridylate)(34)-methyltransferase activity"/>
    <property type="evidence" value="ECO:0007669"/>
    <property type="project" value="UniProtKB-EC"/>
</dbReference>
<dbReference type="GO" id="GO:0032259">
    <property type="term" value="P:methylation"/>
    <property type="evidence" value="ECO:0007669"/>
    <property type="project" value="UniProtKB-KW"/>
</dbReference>
<dbReference type="GO" id="GO:0002098">
    <property type="term" value="P:tRNA wobble uridine modification"/>
    <property type="evidence" value="ECO:0007669"/>
    <property type="project" value="TreeGrafter"/>
</dbReference>
<dbReference type="FunFam" id="3.40.50.150:FF:000107">
    <property type="entry name" value="tRNA 5-methylaminomethyl-2-thiouridine biosynthesis bifunctional protein MnmC"/>
    <property type="match status" value="1"/>
</dbReference>
<dbReference type="Gene3D" id="3.30.9.10">
    <property type="entry name" value="D-Amino Acid Oxidase, subunit A, domain 2"/>
    <property type="match status" value="1"/>
</dbReference>
<dbReference type="Gene3D" id="3.50.50.60">
    <property type="entry name" value="FAD/NAD(P)-binding domain"/>
    <property type="match status" value="1"/>
</dbReference>
<dbReference type="Gene3D" id="3.40.50.150">
    <property type="entry name" value="Vaccinia Virus protein VP39"/>
    <property type="match status" value="1"/>
</dbReference>
<dbReference type="HAMAP" id="MF_01102">
    <property type="entry name" value="MnmC"/>
    <property type="match status" value="1"/>
</dbReference>
<dbReference type="InterPro" id="IPR006076">
    <property type="entry name" value="FAD-dep_OxRdtase"/>
</dbReference>
<dbReference type="InterPro" id="IPR036188">
    <property type="entry name" value="FAD/NAD-bd_sf"/>
</dbReference>
<dbReference type="InterPro" id="IPR008471">
    <property type="entry name" value="MnmC-like_methylTransf"/>
</dbReference>
<dbReference type="InterPro" id="IPR029063">
    <property type="entry name" value="SAM-dependent_MTases_sf"/>
</dbReference>
<dbReference type="InterPro" id="IPR023032">
    <property type="entry name" value="tRNA_MAMT_biosynth_bifunc_MnmC"/>
</dbReference>
<dbReference type="InterPro" id="IPR047785">
    <property type="entry name" value="tRNA_MNMC2"/>
</dbReference>
<dbReference type="InterPro" id="IPR017610">
    <property type="entry name" value="tRNA_S-uridine_synth_MnmC_C"/>
</dbReference>
<dbReference type="NCBIfam" id="TIGR03197">
    <property type="entry name" value="MnmC_Cterm"/>
    <property type="match status" value="1"/>
</dbReference>
<dbReference type="NCBIfam" id="NF002481">
    <property type="entry name" value="PRK01747.1-2"/>
    <property type="match status" value="1"/>
</dbReference>
<dbReference type="NCBIfam" id="NF002482">
    <property type="entry name" value="PRK01747.1-3"/>
    <property type="match status" value="1"/>
</dbReference>
<dbReference type="NCBIfam" id="NF002484">
    <property type="entry name" value="PRK01747.1-5"/>
    <property type="match status" value="1"/>
</dbReference>
<dbReference type="NCBIfam" id="NF033855">
    <property type="entry name" value="tRNA_MNMC2"/>
    <property type="match status" value="1"/>
</dbReference>
<dbReference type="PANTHER" id="PTHR13847">
    <property type="entry name" value="SARCOSINE DEHYDROGENASE-RELATED"/>
    <property type="match status" value="1"/>
</dbReference>
<dbReference type="PANTHER" id="PTHR13847:SF283">
    <property type="entry name" value="TRNA 5-METHYLAMINOMETHYL-2-THIOURIDINE BIOSYNTHESIS BIFUNCTIONAL PROTEIN MNMC"/>
    <property type="match status" value="1"/>
</dbReference>
<dbReference type="Pfam" id="PF01266">
    <property type="entry name" value="DAO"/>
    <property type="match status" value="1"/>
</dbReference>
<dbReference type="Pfam" id="PF05430">
    <property type="entry name" value="Methyltransf_30"/>
    <property type="match status" value="1"/>
</dbReference>
<dbReference type="SUPFAM" id="SSF54373">
    <property type="entry name" value="FAD-linked reductases, C-terminal domain"/>
    <property type="match status" value="1"/>
</dbReference>
<dbReference type="SUPFAM" id="SSF51905">
    <property type="entry name" value="FAD/NAD(P)-binding domain"/>
    <property type="match status" value="1"/>
</dbReference>
<proteinExistence type="inferred from homology"/>
<organism>
    <name type="scientific">Yersinia enterocolitica serotype O:8 / biotype 1B (strain NCTC 13174 / 8081)</name>
    <dbReference type="NCBI Taxonomy" id="393305"/>
    <lineage>
        <taxon>Bacteria</taxon>
        <taxon>Pseudomonadati</taxon>
        <taxon>Pseudomonadota</taxon>
        <taxon>Gammaproteobacteria</taxon>
        <taxon>Enterobacterales</taxon>
        <taxon>Yersiniaceae</taxon>
        <taxon>Yersinia</taxon>
    </lineage>
</organism>